<organism>
    <name type="scientific">Methylococcus capsulatus (strain ATCC 33009 / NCIMB 11132 / Bath)</name>
    <dbReference type="NCBI Taxonomy" id="243233"/>
    <lineage>
        <taxon>Bacteria</taxon>
        <taxon>Pseudomonadati</taxon>
        <taxon>Pseudomonadota</taxon>
        <taxon>Gammaproteobacteria</taxon>
        <taxon>Methylococcales</taxon>
        <taxon>Methylococcaceae</taxon>
        <taxon>Methylococcus</taxon>
    </lineage>
</organism>
<gene>
    <name evidence="1" type="primary">miaA</name>
    <name type="ordered locus">MCA1691</name>
</gene>
<feature type="chain" id="PRO_0000163938" description="tRNA dimethylallyltransferase">
    <location>
        <begin position="1"/>
        <end position="312"/>
    </location>
</feature>
<feature type="region of interest" description="Interaction with substrate tRNA" evidence="1">
    <location>
        <begin position="39"/>
        <end position="42"/>
    </location>
</feature>
<feature type="region of interest" description="Interaction with substrate tRNA" evidence="1">
    <location>
        <begin position="163"/>
        <end position="167"/>
    </location>
</feature>
<feature type="binding site" evidence="1">
    <location>
        <begin position="14"/>
        <end position="21"/>
    </location>
    <ligand>
        <name>ATP</name>
        <dbReference type="ChEBI" id="CHEBI:30616"/>
    </ligand>
</feature>
<feature type="binding site" evidence="1">
    <location>
        <begin position="16"/>
        <end position="21"/>
    </location>
    <ligand>
        <name>substrate</name>
    </ligand>
</feature>
<feature type="site" description="Interaction with substrate tRNA" evidence="1">
    <location>
        <position position="105"/>
    </location>
</feature>
<feature type="site" description="Interaction with substrate tRNA" evidence="1">
    <location>
        <position position="127"/>
    </location>
</feature>
<dbReference type="EC" id="2.5.1.75" evidence="1"/>
<dbReference type="EMBL" id="AE017282">
    <property type="protein sequence ID" value="AAU92073.1"/>
    <property type="molecule type" value="Genomic_DNA"/>
</dbReference>
<dbReference type="RefSeq" id="WP_010960949.1">
    <property type="nucleotide sequence ID" value="NC_002977.6"/>
</dbReference>
<dbReference type="SMR" id="Q607R4"/>
<dbReference type="STRING" id="243233.MCA1691"/>
<dbReference type="GeneID" id="88223948"/>
<dbReference type="KEGG" id="mca:MCA1691"/>
<dbReference type="eggNOG" id="COG0324">
    <property type="taxonomic scope" value="Bacteria"/>
</dbReference>
<dbReference type="HOGENOM" id="CLU_032616_0_0_6"/>
<dbReference type="Proteomes" id="UP000006821">
    <property type="component" value="Chromosome"/>
</dbReference>
<dbReference type="GO" id="GO:0005524">
    <property type="term" value="F:ATP binding"/>
    <property type="evidence" value="ECO:0007669"/>
    <property type="project" value="UniProtKB-UniRule"/>
</dbReference>
<dbReference type="GO" id="GO:0052381">
    <property type="term" value="F:tRNA dimethylallyltransferase activity"/>
    <property type="evidence" value="ECO:0007669"/>
    <property type="project" value="UniProtKB-UniRule"/>
</dbReference>
<dbReference type="GO" id="GO:0006400">
    <property type="term" value="P:tRNA modification"/>
    <property type="evidence" value="ECO:0007669"/>
    <property type="project" value="TreeGrafter"/>
</dbReference>
<dbReference type="FunFam" id="1.10.20.140:FF:000001">
    <property type="entry name" value="tRNA dimethylallyltransferase"/>
    <property type="match status" value="1"/>
</dbReference>
<dbReference type="Gene3D" id="1.10.20.140">
    <property type="match status" value="1"/>
</dbReference>
<dbReference type="Gene3D" id="3.40.50.300">
    <property type="entry name" value="P-loop containing nucleotide triphosphate hydrolases"/>
    <property type="match status" value="1"/>
</dbReference>
<dbReference type="HAMAP" id="MF_00185">
    <property type="entry name" value="IPP_trans"/>
    <property type="match status" value="1"/>
</dbReference>
<dbReference type="InterPro" id="IPR039657">
    <property type="entry name" value="Dimethylallyltransferase"/>
</dbReference>
<dbReference type="InterPro" id="IPR018022">
    <property type="entry name" value="IPT"/>
</dbReference>
<dbReference type="InterPro" id="IPR027417">
    <property type="entry name" value="P-loop_NTPase"/>
</dbReference>
<dbReference type="NCBIfam" id="TIGR00174">
    <property type="entry name" value="miaA"/>
    <property type="match status" value="1"/>
</dbReference>
<dbReference type="PANTHER" id="PTHR11088">
    <property type="entry name" value="TRNA DIMETHYLALLYLTRANSFERASE"/>
    <property type="match status" value="1"/>
</dbReference>
<dbReference type="PANTHER" id="PTHR11088:SF60">
    <property type="entry name" value="TRNA DIMETHYLALLYLTRANSFERASE"/>
    <property type="match status" value="1"/>
</dbReference>
<dbReference type="Pfam" id="PF01715">
    <property type="entry name" value="IPPT"/>
    <property type="match status" value="1"/>
</dbReference>
<dbReference type="SUPFAM" id="SSF52540">
    <property type="entry name" value="P-loop containing nucleoside triphosphate hydrolases"/>
    <property type="match status" value="2"/>
</dbReference>
<keyword id="KW-0067">ATP-binding</keyword>
<keyword id="KW-0460">Magnesium</keyword>
<keyword id="KW-0547">Nucleotide-binding</keyword>
<keyword id="KW-1185">Reference proteome</keyword>
<keyword id="KW-0808">Transferase</keyword>
<keyword id="KW-0819">tRNA processing</keyword>
<proteinExistence type="inferred from homology"/>
<reference key="1">
    <citation type="journal article" date="2004" name="PLoS Biol.">
        <title>Genomic insights into methanotrophy: the complete genome sequence of Methylococcus capsulatus (Bath).</title>
        <authorList>
            <person name="Ward N.L."/>
            <person name="Larsen O."/>
            <person name="Sakwa J."/>
            <person name="Bruseth L."/>
            <person name="Khouri H.M."/>
            <person name="Durkin A.S."/>
            <person name="Dimitrov G."/>
            <person name="Jiang L."/>
            <person name="Scanlan D."/>
            <person name="Kang K.H."/>
            <person name="Lewis M.R."/>
            <person name="Nelson K.E."/>
            <person name="Methe B.A."/>
            <person name="Wu M."/>
            <person name="Heidelberg J.F."/>
            <person name="Paulsen I.T."/>
            <person name="Fouts D.E."/>
            <person name="Ravel J."/>
            <person name="Tettelin H."/>
            <person name="Ren Q."/>
            <person name="Read T.D."/>
            <person name="DeBoy R.T."/>
            <person name="Seshadri R."/>
            <person name="Salzberg S.L."/>
            <person name="Jensen H.B."/>
            <person name="Birkeland N.K."/>
            <person name="Nelson W.C."/>
            <person name="Dodson R.J."/>
            <person name="Grindhaug S.H."/>
            <person name="Holt I.E."/>
            <person name="Eidhammer I."/>
            <person name="Jonasen I."/>
            <person name="Vanaken S."/>
            <person name="Utterback T.R."/>
            <person name="Feldblyum T.V."/>
            <person name="Fraser C.M."/>
            <person name="Lillehaug J.R."/>
            <person name="Eisen J.A."/>
        </authorList>
    </citation>
    <scope>NUCLEOTIDE SEQUENCE [LARGE SCALE GENOMIC DNA]</scope>
    <source>
        <strain>ATCC 33009 / NCIMB 11132 / Bath</strain>
    </source>
</reference>
<evidence type="ECO:0000255" key="1">
    <source>
        <dbReference type="HAMAP-Rule" id="MF_00185"/>
    </source>
</evidence>
<comment type="function">
    <text evidence="1">Catalyzes the transfer of a dimethylallyl group onto the adenine at position 37 in tRNAs that read codons beginning with uridine, leading to the formation of N6-(dimethylallyl)adenosine (i(6)A).</text>
</comment>
<comment type="catalytic activity">
    <reaction evidence="1">
        <text>adenosine(37) in tRNA + dimethylallyl diphosphate = N(6)-dimethylallyladenosine(37) in tRNA + diphosphate</text>
        <dbReference type="Rhea" id="RHEA:26482"/>
        <dbReference type="Rhea" id="RHEA-COMP:10162"/>
        <dbReference type="Rhea" id="RHEA-COMP:10375"/>
        <dbReference type="ChEBI" id="CHEBI:33019"/>
        <dbReference type="ChEBI" id="CHEBI:57623"/>
        <dbReference type="ChEBI" id="CHEBI:74411"/>
        <dbReference type="ChEBI" id="CHEBI:74415"/>
        <dbReference type="EC" id="2.5.1.75"/>
    </reaction>
</comment>
<comment type="cofactor">
    <cofactor evidence="1">
        <name>Mg(2+)</name>
        <dbReference type="ChEBI" id="CHEBI:18420"/>
    </cofactor>
</comment>
<comment type="subunit">
    <text evidence="1">Monomer.</text>
</comment>
<comment type="similarity">
    <text evidence="1">Belongs to the IPP transferase family.</text>
</comment>
<sequence length="312" mass="34579">MSAAELPPVVVLMGPTASGKSQLAIELANALDGEIVSVDSSLVYRGMDIGTAKPTPTERAAVPHHLIDVLDPSEVFSTGRFRDEALALIADITARGRLPVLAGGTMLYFNALLRGLAELPSADPDLRREIETRAARDGWHALHAELARIDPPAAARIHPNDPQRLQRALEVFYLTGRTLSDLCEGSRSPELPFRPLRIVLAPSSRAVLAERIAERFRRMLEEGFLEEVEALYRRGDLNETLPSIRAVGYRQAWGYLQGDYGFDTFVERAIIATRQFAKRQCTWLRKETEATWLETGTPGLSDRAAKEVRARL</sequence>
<name>MIAA_METCA</name>
<protein>
    <recommendedName>
        <fullName evidence="1">tRNA dimethylallyltransferase</fullName>
        <ecNumber evidence="1">2.5.1.75</ecNumber>
    </recommendedName>
    <alternativeName>
        <fullName evidence="1">Dimethylallyl diphosphate:tRNA dimethylallyltransferase</fullName>
        <shortName evidence="1">DMAPP:tRNA dimethylallyltransferase</shortName>
        <shortName evidence="1">DMATase</shortName>
    </alternativeName>
    <alternativeName>
        <fullName evidence="1">Isopentenyl-diphosphate:tRNA isopentenyltransferase</fullName>
        <shortName evidence="1">IPP transferase</shortName>
        <shortName evidence="1">IPPT</shortName>
        <shortName evidence="1">IPTase</shortName>
    </alternativeName>
</protein>
<accession>Q607R4</accession>